<dbReference type="EC" id="6.1.1.16" evidence="1"/>
<dbReference type="EMBL" id="BA000031">
    <property type="protein sequence ID" value="BAC59413.1"/>
    <property type="molecule type" value="Genomic_DNA"/>
</dbReference>
<dbReference type="RefSeq" id="NP_797529.1">
    <property type="nucleotide sequence ID" value="NC_004603.1"/>
</dbReference>
<dbReference type="RefSeq" id="WP_005478905.1">
    <property type="nucleotide sequence ID" value="NC_004603.1"/>
</dbReference>
<dbReference type="SMR" id="Q87QJ9"/>
<dbReference type="GeneID" id="1188655"/>
<dbReference type="KEGG" id="vpa:VP1150"/>
<dbReference type="PATRIC" id="fig|223926.6.peg.1091"/>
<dbReference type="eggNOG" id="COG0215">
    <property type="taxonomic scope" value="Bacteria"/>
</dbReference>
<dbReference type="HOGENOM" id="CLU_013528_0_1_6"/>
<dbReference type="Proteomes" id="UP000002493">
    <property type="component" value="Chromosome 1"/>
</dbReference>
<dbReference type="GO" id="GO:0005829">
    <property type="term" value="C:cytosol"/>
    <property type="evidence" value="ECO:0007669"/>
    <property type="project" value="TreeGrafter"/>
</dbReference>
<dbReference type="GO" id="GO:0005524">
    <property type="term" value="F:ATP binding"/>
    <property type="evidence" value="ECO:0007669"/>
    <property type="project" value="UniProtKB-UniRule"/>
</dbReference>
<dbReference type="GO" id="GO:0004817">
    <property type="term" value="F:cysteine-tRNA ligase activity"/>
    <property type="evidence" value="ECO:0007669"/>
    <property type="project" value="UniProtKB-UniRule"/>
</dbReference>
<dbReference type="GO" id="GO:0008270">
    <property type="term" value="F:zinc ion binding"/>
    <property type="evidence" value="ECO:0007669"/>
    <property type="project" value="UniProtKB-UniRule"/>
</dbReference>
<dbReference type="GO" id="GO:0006423">
    <property type="term" value="P:cysteinyl-tRNA aminoacylation"/>
    <property type="evidence" value="ECO:0007669"/>
    <property type="project" value="UniProtKB-UniRule"/>
</dbReference>
<dbReference type="CDD" id="cd07963">
    <property type="entry name" value="Anticodon_Ia_Cys"/>
    <property type="match status" value="1"/>
</dbReference>
<dbReference type="CDD" id="cd00672">
    <property type="entry name" value="CysRS_core"/>
    <property type="match status" value="1"/>
</dbReference>
<dbReference type="FunFam" id="1.20.120.1910:FF:000001">
    <property type="entry name" value="Cysteine--tRNA ligase"/>
    <property type="match status" value="1"/>
</dbReference>
<dbReference type="FunFam" id="3.40.50.620:FF:000009">
    <property type="entry name" value="Cysteine--tRNA ligase"/>
    <property type="match status" value="1"/>
</dbReference>
<dbReference type="Gene3D" id="1.20.120.1910">
    <property type="entry name" value="Cysteine-tRNA ligase, C-terminal anti-codon recognition domain"/>
    <property type="match status" value="1"/>
</dbReference>
<dbReference type="Gene3D" id="3.40.50.620">
    <property type="entry name" value="HUPs"/>
    <property type="match status" value="1"/>
</dbReference>
<dbReference type="HAMAP" id="MF_00041">
    <property type="entry name" value="Cys_tRNA_synth"/>
    <property type="match status" value="1"/>
</dbReference>
<dbReference type="InterPro" id="IPR015803">
    <property type="entry name" value="Cys-tRNA-ligase"/>
</dbReference>
<dbReference type="InterPro" id="IPR015273">
    <property type="entry name" value="Cys-tRNA-synt_Ia_DALR"/>
</dbReference>
<dbReference type="InterPro" id="IPR024909">
    <property type="entry name" value="Cys-tRNA/MSH_ligase"/>
</dbReference>
<dbReference type="InterPro" id="IPR056411">
    <property type="entry name" value="CysS_C"/>
</dbReference>
<dbReference type="InterPro" id="IPR014729">
    <property type="entry name" value="Rossmann-like_a/b/a_fold"/>
</dbReference>
<dbReference type="InterPro" id="IPR032678">
    <property type="entry name" value="tRNA-synt_1_cat_dom"/>
</dbReference>
<dbReference type="InterPro" id="IPR009080">
    <property type="entry name" value="tRNAsynth_Ia_anticodon-bd"/>
</dbReference>
<dbReference type="NCBIfam" id="TIGR00435">
    <property type="entry name" value="cysS"/>
    <property type="match status" value="1"/>
</dbReference>
<dbReference type="PANTHER" id="PTHR10890:SF3">
    <property type="entry name" value="CYSTEINE--TRNA LIGASE, CYTOPLASMIC"/>
    <property type="match status" value="1"/>
</dbReference>
<dbReference type="PANTHER" id="PTHR10890">
    <property type="entry name" value="CYSTEINYL-TRNA SYNTHETASE"/>
    <property type="match status" value="1"/>
</dbReference>
<dbReference type="Pfam" id="PF23493">
    <property type="entry name" value="CysS_C"/>
    <property type="match status" value="1"/>
</dbReference>
<dbReference type="Pfam" id="PF09190">
    <property type="entry name" value="DALR_2"/>
    <property type="match status" value="1"/>
</dbReference>
<dbReference type="Pfam" id="PF01406">
    <property type="entry name" value="tRNA-synt_1e"/>
    <property type="match status" value="1"/>
</dbReference>
<dbReference type="PRINTS" id="PR00983">
    <property type="entry name" value="TRNASYNTHCYS"/>
</dbReference>
<dbReference type="SMART" id="SM00840">
    <property type="entry name" value="DALR_2"/>
    <property type="match status" value="1"/>
</dbReference>
<dbReference type="SUPFAM" id="SSF47323">
    <property type="entry name" value="Anticodon-binding domain of a subclass of class I aminoacyl-tRNA synthetases"/>
    <property type="match status" value="1"/>
</dbReference>
<dbReference type="SUPFAM" id="SSF52374">
    <property type="entry name" value="Nucleotidylyl transferase"/>
    <property type="match status" value="1"/>
</dbReference>
<proteinExistence type="inferred from homology"/>
<feature type="chain" id="PRO_0000159519" description="Cysteine--tRNA ligase">
    <location>
        <begin position="1"/>
        <end position="460"/>
    </location>
</feature>
<feature type="short sequence motif" description="'HIGH' region">
    <location>
        <begin position="30"/>
        <end position="40"/>
    </location>
</feature>
<feature type="short sequence motif" description="'KMSKS' region">
    <location>
        <begin position="266"/>
        <end position="270"/>
    </location>
</feature>
<feature type="binding site" evidence="1">
    <location>
        <position position="28"/>
    </location>
    <ligand>
        <name>Zn(2+)</name>
        <dbReference type="ChEBI" id="CHEBI:29105"/>
    </ligand>
</feature>
<feature type="binding site" evidence="1">
    <location>
        <position position="209"/>
    </location>
    <ligand>
        <name>Zn(2+)</name>
        <dbReference type="ChEBI" id="CHEBI:29105"/>
    </ligand>
</feature>
<feature type="binding site" evidence="1">
    <location>
        <position position="234"/>
    </location>
    <ligand>
        <name>Zn(2+)</name>
        <dbReference type="ChEBI" id="CHEBI:29105"/>
    </ligand>
</feature>
<feature type="binding site" evidence="1">
    <location>
        <position position="238"/>
    </location>
    <ligand>
        <name>Zn(2+)</name>
        <dbReference type="ChEBI" id="CHEBI:29105"/>
    </ligand>
</feature>
<feature type="binding site" evidence="1">
    <location>
        <position position="269"/>
    </location>
    <ligand>
        <name>ATP</name>
        <dbReference type="ChEBI" id="CHEBI:30616"/>
    </ligand>
</feature>
<reference key="1">
    <citation type="journal article" date="2003" name="Lancet">
        <title>Genome sequence of Vibrio parahaemolyticus: a pathogenic mechanism distinct from that of V. cholerae.</title>
        <authorList>
            <person name="Makino K."/>
            <person name="Oshima K."/>
            <person name="Kurokawa K."/>
            <person name="Yokoyama K."/>
            <person name="Uda T."/>
            <person name="Tagomori K."/>
            <person name="Iijima Y."/>
            <person name="Najima M."/>
            <person name="Nakano M."/>
            <person name="Yamashita A."/>
            <person name="Kubota Y."/>
            <person name="Kimura S."/>
            <person name="Yasunaga T."/>
            <person name="Honda T."/>
            <person name="Shinagawa H."/>
            <person name="Hattori M."/>
            <person name="Iida T."/>
        </authorList>
    </citation>
    <scope>NUCLEOTIDE SEQUENCE [LARGE SCALE GENOMIC DNA]</scope>
    <source>
        <strain>RIMD 2210633</strain>
    </source>
</reference>
<protein>
    <recommendedName>
        <fullName evidence="1">Cysteine--tRNA ligase</fullName>
        <ecNumber evidence="1">6.1.1.16</ecNumber>
    </recommendedName>
    <alternativeName>
        <fullName evidence="1">Cysteinyl-tRNA synthetase</fullName>
        <shortName evidence="1">CysRS</shortName>
    </alternativeName>
</protein>
<sequence>MLKIYNTLTRQKEEFKPITAGKVGMYVCGVTIYDLCHIGHGRTFVSFDVVSRYLRYLGYDLTFVRNITDIDDKIIKRAAENGESCESLTERLIGDMHADFDALNMKRPDVEPRATQFIAEIIELVEKLIERGFAYVADNGDVMFEVGKFDEYGKLSKQDLDQLQAGARVDIETAKRSPLDFVLWKMSKPGEPTWESPWGPGRPGWHIECSAMNSTILGDHFDIHGGGSDLQFPHHENEIAQSCCAHDTKYVNTWMHSGMVMVDREKMSKSLGNFFTIRDVLGHYDAETVRYFLMSGHYRSQLNYSEDNLNQARASLERLYTSLRGLDLNAAPAGGEEYVSRFTAAMNDDFNTPEAYSVLFDMAREVNRLKTESVEKASELGALMRELADVIGILYQDPEAFLKGNAGNDDEVAEIEALIKLRNDSRASKDWANADMARDKLTEMGIVLEDGPEGTTWRRK</sequence>
<keyword id="KW-0030">Aminoacyl-tRNA synthetase</keyword>
<keyword id="KW-0067">ATP-binding</keyword>
<keyword id="KW-0963">Cytoplasm</keyword>
<keyword id="KW-0436">Ligase</keyword>
<keyword id="KW-0479">Metal-binding</keyword>
<keyword id="KW-0547">Nucleotide-binding</keyword>
<keyword id="KW-0648">Protein biosynthesis</keyword>
<keyword id="KW-0862">Zinc</keyword>
<accession>Q87QJ9</accession>
<organism>
    <name type="scientific">Vibrio parahaemolyticus serotype O3:K6 (strain RIMD 2210633)</name>
    <dbReference type="NCBI Taxonomy" id="223926"/>
    <lineage>
        <taxon>Bacteria</taxon>
        <taxon>Pseudomonadati</taxon>
        <taxon>Pseudomonadota</taxon>
        <taxon>Gammaproteobacteria</taxon>
        <taxon>Vibrionales</taxon>
        <taxon>Vibrionaceae</taxon>
        <taxon>Vibrio</taxon>
    </lineage>
</organism>
<comment type="catalytic activity">
    <reaction evidence="1">
        <text>tRNA(Cys) + L-cysteine + ATP = L-cysteinyl-tRNA(Cys) + AMP + diphosphate</text>
        <dbReference type="Rhea" id="RHEA:17773"/>
        <dbReference type="Rhea" id="RHEA-COMP:9661"/>
        <dbReference type="Rhea" id="RHEA-COMP:9679"/>
        <dbReference type="ChEBI" id="CHEBI:30616"/>
        <dbReference type="ChEBI" id="CHEBI:33019"/>
        <dbReference type="ChEBI" id="CHEBI:35235"/>
        <dbReference type="ChEBI" id="CHEBI:78442"/>
        <dbReference type="ChEBI" id="CHEBI:78517"/>
        <dbReference type="ChEBI" id="CHEBI:456215"/>
        <dbReference type="EC" id="6.1.1.16"/>
    </reaction>
</comment>
<comment type="cofactor">
    <cofactor evidence="1">
        <name>Zn(2+)</name>
        <dbReference type="ChEBI" id="CHEBI:29105"/>
    </cofactor>
    <text evidence="1">Binds 1 zinc ion per subunit.</text>
</comment>
<comment type="subunit">
    <text evidence="1">Monomer.</text>
</comment>
<comment type="subcellular location">
    <subcellularLocation>
        <location evidence="1">Cytoplasm</location>
    </subcellularLocation>
</comment>
<comment type="similarity">
    <text evidence="1">Belongs to the class-I aminoacyl-tRNA synthetase family.</text>
</comment>
<gene>
    <name evidence="1" type="primary">cysS</name>
    <name type="ordered locus">VP1150</name>
</gene>
<name>SYC_VIBPA</name>
<evidence type="ECO:0000255" key="1">
    <source>
        <dbReference type="HAMAP-Rule" id="MF_00041"/>
    </source>
</evidence>